<sequence>MNKKKPLILVTNDDGITAPGIRTLVEVMKELGDVIVVAPDSPQSGMGHAITISDTLFCEQVTIKESYKHKEYSCSGTPADCVKIATQEILHRKPDLCVSGINHGSNSSINVIYSGTMSAAVEAGIEGIPAIGFSLLDYSLNADFEPTRKFIKTITKNVLKNGLPIGVVLNVNIPKLKEAEIKGIKVCRQANAHWEEEFDKRTNPQGREYYWLTGKFVNKDEGKDTDEKALEEGYVSVVPVQFDLTAHHFIKDLSSWSLND</sequence>
<comment type="function">
    <text evidence="1">Nucleotidase that shows phosphatase activity on nucleoside 5'-monophosphates.</text>
</comment>
<comment type="catalytic activity">
    <reaction evidence="1">
        <text>a ribonucleoside 5'-phosphate + H2O = a ribonucleoside + phosphate</text>
        <dbReference type="Rhea" id="RHEA:12484"/>
        <dbReference type="ChEBI" id="CHEBI:15377"/>
        <dbReference type="ChEBI" id="CHEBI:18254"/>
        <dbReference type="ChEBI" id="CHEBI:43474"/>
        <dbReference type="ChEBI" id="CHEBI:58043"/>
        <dbReference type="EC" id="3.1.3.5"/>
    </reaction>
</comment>
<comment type="cofactor">
    <cofactor evidence="1">
        <name>a divalent metal cation</name>
        <dbReference type="ChEBI" id="CHEBI:60240"/>
    </cofactor>
    <text evidence="1">Binds 1 divalent metal cation per subunit.</text>
</comment>
<comment type="subcellular location">
    <subcellularLocation>
        <location evidence="1">Cytoplasm</location>
    </subcellularLocation>
</comment>
<comment type="similarity">
    <text evidence="1">Belongs to the SurE nucleotidase family.</text>
</comment>
<organism>
    <name type="scientific">Christiangramia forsetii (strain DSM 17595 / CGMCC 1.15422 / KT0803)</name>
    <name type="common">Gramella forsetii</name>
    <dbReference type="NCBI Taxonomy" id="411154"/>
    <lineage>
        <taxon>Bacteria</taxon>
        <taxon>Pseudomonadati</taxon>
        <taxon>Bacteroidota</taxon>
        <taxon>Flavobacteriia</taxon>
        <taxon>Flavobacteriales</taxon>
        <taxon>Flavobacteriaceae</taxon>
        <taxon>Christiangramia</taxon>
    </lineage>
</organism>
<feature type="chain" id="PRO_1000007732" description="5'-nucleotidase SurE">
    <location>
        <begin position="1"/>
        <end position="260"/>
    </location>
</feature>
<feature type="binding site" evidence="1">
    <location>
        <position position="13"/>
    </location>
    <ligand>
        <name>a divalent metal cation</name>
        <dbReference type="ChEBI" id="CHEBI:60240"/>
    </ligand>
</feature>
<feature type="binding site" evidence="1">
    <location>
        <position position="14"/>
    </location>
    <ligand>
        <name>a divalent metal cation</name>
        <dbReference type="ChEBI" id="CHEBI:60240"/>
    </ligand>
</feature>
<feature type="binding site" evidence="1">
    <location>
        <position position="44"/>
    </location>
    <ligand>
        <name>a divalent metal cation</name>
        <dbReference type="ChEBI" id="CHEBI:60240"/>
    </ligand>
</feature>
<feature type="binding site" evidence="1">
    <location>
        <position position="102"/>
    </location>
    <ligand>
        <name>a divalent metal cation</name>
        <dbReference type="ChEBI" id="CHEBI:60240"/>
    </ligand>
</feature>
<accession>A0M5L6</accession>
<name>SURE_CHRFK</name>
<reference key="1">
    <citation type="journal article" date="2006" name="Environ. Microbiol.">
        <title>Whole genome analysis of the marine Bacteroidetes'Gramella forsetii' reveals adaptations to degradation of polymeric organic matter.</title>
        <authorList>
            <person name="Bauer M."/>
            <person name="Kube M."/>
            <person name="Teeling H."/>
            <person name="Richter M."/>
            <person name="Lombardot T."/>
            <person name="Allers E."/>
            <person name="Wuerdemann C.A."/>
            <person name="Quast C."/>
            <person name="Kuhl H."/>
            <person name="Knaust F."/>
            <person name="Woebken D."/>
            <person name="Bischof K."/>
            <person name="Mussmann M."/>
            <person name="Choudhuri J.V."/>
            <person name="Meyer F."/>
            <person name="Reinhardt R."/>
            <person name="Amann R.I."/>
            <person name="Gloeckner F.O."/>
        </authorList>
    </citation>
    <scope>NUCLEOTIDE SEQUENCE [LARGE SCALE GENOMIC DNA]</scope>
    <source>
        <strain>DSM 17595 / CGMCC 1.15422 / KT0803</strain>
    </source>
</reference>
<gene>
    <name evidence="1" type="primary">surE</name>
    <name type="ordered locus">GFO_2964</name>
</gene>
<dbReference type="EC" id="3.1.3.5" evidence="1"/>
<dbReference type="EMBL" id="CU207366">
    <property type="protein sequence ID" value="CAL67911.1"/>
    <property type="molecule type" value="Genomic_DNA"/>
</dbReference>
<dbReference type="RefSeq" id="WP_011710812.1">
    <property type="nucleotide sequence ID" value="NC_008571.1"/>
</dbReference>
<dbReference type="SMR" id="A0M5L6"/>
<dbReference type="STRING" id="411154.GFO_2964"/>
<dbReference type="KEGG" id="gfo:GFO_2964"/>
<dbReference type="eggNOG" id="COG0496">
    <property type="taxonomic scope" value="Bacteria"/>
</dbReference>
<dbReference type="HOGENOM" id="CLU_045192_1_0_10"/>
<dbReference type="OrthoDB" id="9780815at2"/>
<dbReference type="Proteomes" id="UP000000755">
    <property type="component" value="Chromosome"/>
</dbReference>
<dbReference type="GO" id="GO:0005737">
    <property type="term" value="C:cytoplasm"/>
    <property type="evidence" value="ECO:0007669"/>
    <property type="project" value="UniProtKB-SubCell"/>
</dbReference>
<dbReference type="GO" id="GO:0008253">
    <property type="term" value="F:5'-nucleotidase activity"/>
    <property type="evidence" value="ECO:0007669"/>
    <property type="project" value="UniProtKB-UniRule"/>
</dbReference>
<dbReference type="GO" id="GO:0046872">
    <property type="term" value="F:metal ion binding"/>
    <property type="evidence" value="ECO:0007669"/>
    <property type="project" value="UniProtKB-UniRule"/>
</dbReference>
<dbReference type="GO" id="GO:0000166">
    <property type="term" value="F:nucleotide binding"/>
    <property type="evidence" value="ECO:0007669"/>
    <property type="project" value="UniProtKB-KW"/>
</dbReference>
<dbReference type="FunFam" id="3.40.1210.10:FF:000001">
    <property type="entry name" value="5'/3'-nucleotidase SurE"/>
    <property type="match status" value="1"/>
</dbReference>
<dbReference type="Gene3D" id="3.40.1210.10">
    <property type="entry name" value="Survival protein SurE-like phosphatase/nucleotidase"/>
    <property type="match status" value="1"/>
</dbReference>
<dbReference type="HAMAP" id="MF_00060">
    <property type="entry name" value="SurE"/>
    <property type="match status" value="1"/>
</dbReference>
<dbReference type="InterPro" id="IPR030048">
    <property type="entry name" value="SurE"/>
</dbReference>
<dbReference type="InterPro" id="IPR002828">
    <property type="entry name" value="SurE-like_Pase/nucleotidase"/>
</dbReference>
<dbReference type="InterPro" id="IPR036523">
    <property type="entry name" value="SurE-like_sf"/>
</dbReference>
<dbReference type="NCBIfam" id="NF001490">
    <property type="entry name" value="PRK00346.1-4"/>
    <property type="match status" value="1"/>
</dbReference>
<dbReference type="NCBIfam" id="NF001492">
    <property type="entry name" value="PRK00346.2-2"/>
    <property type="match status" value="1"/>
</dbReference>
<dbReference type="NCBIfam" id="TIGR00087">
    <property type="entry name" value="surE"/>
    <property type="match status" value="1"/>
</dbReference>
<dbReference type="PANTHER" id="PTHR30457">
    <property type="entry name" value="5'-NUCLEOTIDASE SURE"/>
    <property type="match status" value="1"/>
</dbReference>
<dbReference type="PANTHER" id="PTHR30457:SF0">
    <property type="entry name" value="PHOSPHATASE, PUTATIVE (AFU_ORTHOLOGUE AFUA_4G01070)-RELATED"/>
    <property type="match status" value="1"/>
</dbReference>
<dbReference type="Pfam" id="PF01975">
    <property type="entry name" value="SurE"/>
    <property type="match status" value="1"/>
</dbReference>
<dbReference type="SUPFAM" id="SSF64167">
    <property type="entry name" value="SurE-like"/>
    <property type="match status" value="1"/>
</dbReference>
<keyword id="KW-0963">Cytoplasm</keyword>
<keyword id="KW-0378">Hydrolase</keyword>
<keyword id="KW-0479">Metal-binding</keyword>
<keyword id="KW-0547">Nucleotide-binding</keyword>
<protein>
    <recommendedName>
        <fullName evidence="1">5'-nucleotidase SurE</fullName>
        <ecNumber evidence="1">3.1.3.5</ecNumber>
    </recommendedName>
    <alternativeName>
        <fullName evidence="1">Nucleoside 5'-monophosphate phosphohydrolase</fullName>
    </alternativeName>
</protein>
<proteinExistence type="inferred from homology"/>
<evidence type="ECO:0000255" key="1">
    <source>
        <dbReference type="HAMAP-Rule" id="MF_00060"/>
    </source>
</evidence>